<protein>
    <recommendedName>
        <fullName>Bifunctional protein ArgH</fullName>
    </recommendedName>
    <domain>
        <recommendedName>
            <fullName>Argininosuccinate lyase</fullName>
            <shortName>ASAL</shortName>
            <ecNumber>4.3.2.1</ecNumber>
        </recommendedName>
        <alternativeName>
            <fullName>Arginosuccinase</fullName>
        </alternativeName>
    </domain>
    <domain>
        <recommendedName>
            <fullName>Probable acetyltransferase</fullName>
            <ecNumber>2.3.1.-</ecNumber>
        </recommendedName>
    </domain>
</protein>
<organism>
    <name type="scientific">Vibrio vulnificus (strain CMCP6)</name>
    <dbReference type="NCBI Taxonomy" id="216895"/>
    <lineage>
        <taxon>Bacteria</taxon>
        <taxon>Pseudomonadati</taxon>
        <taxon>Pseudomonadota</taxon>
        <taxon>Gammaproteobacteria</taxon>
        <taxon>Vibrionales</taxon>
        <taxon>Vibrionaceae</taxon>
        <taxon>Vibrio</taxon>
    </lineage>
</organism>
<gene>
    <name type="primary">argH</name>
    <name type="ordered locus">VV1_1374</name>
</gene>
<accession>Q8DCM9</accession>
<name>ARLY_VIBVU</name>
<keyword id="KW-0012">Acyltransferase</keyword>
<keyword id="KW-0028">Amino-acid biosynthesis</keyword>
<keyword id="KW-0055">Arginine biosynthesis</keyword>
<keyword id="KW-0963">Cytoplasm</keyword>
<keyword id="KW-0456">Lyase</keyword>
<keyword id="KW-0511">Multifunctional enzyme</keyword>
<keyword id="KW-0808">Transferase</keyword>
<comment type="catalytic activity">
    <reaction>
        <text>2-(N(omega)-L-arginino)succinate = fumarate + L-arginine</text>
        <dbReference type="Rhea" id="RHEA:24020"/>
        <dbReference type="ChEBI" id="CHEBI:29806"/>
        <dbReference type="ChEBI" id="CHEBI:32682"/>
        <dbReference type="ChEBI" id="CHEBI:57472"/>
        <dbReference type="EC" id="4.3.2.1"/>
    </reaction>
</comment>
<comment type="pathway">
    <text>Amino-acid biosynthesis; L-arginine biosynthesis; L-arginine from L-ornithine and carbamoyl phosphate: step 3/3.</text>
</comment>
<comment type="subcellular location">
    <subcellularLocation>
        <location evidence="1">Cytoplasm</location>
    </subcellularLocation>
</comment>
<comment type="similarity">
    <text evidence="2">In the N-terminal section; belongs to the lyase 1 family. Argininosuccinate lyase subfamily.</text>
</comment>
<evidence type="ECO:0000250" key="1"/>
<evidence type="ECO:0000305" key="2"/>
<reference key="1">
    <citation type="submission" date="2002-12" db="EMBL/GenBank/DDBJ databases">
        <title>Complete genome sequence of Vibrio vulnificus CMCP6.</title>
        <authorList>
            <person name="Rhee J.H."/>
            <person name="Kim S.Y."/>
            <person name="Chung S.S."/>
            <person name="Kim J.J."/>
            <person name="Moon Y.H."/>
            <person name="Jeong H."/>
            <person name="Choy H.E."/>
        </authorList>
    </citation>
    <scope>NUCLEOTIDE SEQUENCE [LARGE SCALE GENOMIC DNA]</scope>
    <source>
        <strain>CMCP6</strain>
    </source>
</reference>
<dbReference type="EC" id="4.3.2.1"/>
<dbReference type="EC" id="2.3.1.-"/>
<dbReference type="EMBL" id="AE016795">
    <property type="protein sequence ID" value="AAO09823.1"/>
    <property type="molecule type" value="Genomic_DNA"/>
</dbReference>
<dbReference type="RefSeq" id="WP_011079348.1">
    <property type="nucleotide sequence ID" value="NC_004459.3"/>
</dbReference>
<dbReference type="SMR" id="Q8DCM9"/>
<dbReference type="KEGG" id="vvu:VV1_1374"/>
<dbReference type="HOGENOM" id="CLU_027272_2_3_6"/>
<dbReference type="UniPathway" id="UPA00068">
    <property type="reaction ID" value="UER00114"/>
</dbReference>
<dbReference type="Proteomes" id="UP000002275">
    <property type="component" value="Chromosome 1"/>
</dbReference>
<dbReference type="GO" id="GO:0005829">
    <property type="term" value="C:cytosol"/>
    <property type="evidence" value="ECO:0007669"/>
    <property type="project" value="TreeGrafter"/>
</dbReference>
<dbReference type="GO" id="GO:0016747">
    <property type="term" value="F:acyltransferase activity, transferring groups other than amino-acyl groups"/>
    <property type="evidence" value="ECO:0007669"/>
    <property type="project" value="InterPro"/>
</dbReference>
<dbReference type="GO" id="GO:0004056">
    <property type="term" value="F:argininosuccinate lyase activity"/>
    <property type="evidence" value="ECO:0007669"/>
    <property type="project" value="UniProtKB-UniRule"/>
</dbReference>
<dbReference type="GO" id="GO:0042450">
    <property type="term" value="P:arginine biosynthetic process via ornithine"/>
    <property type="evidence" value="ECO:0007669"/>
    <property type="project" value="InterPro"/>
</dbReference>
<dbReference type="GO" id="GO:0006526">
    <property type="term" value="P:L-arginine biosynthetic process"/>
    <property type="evidence" value="ECO:0007669"/>
    <property type="project" value="UniProtKB-UniRule"/>
</dbReference>
<dbReference type="CDD" id="cd01359">
    <property type="entry name" value="Argininosuccinate_lyase"/>
    <property type="match status" value="1"/>
</dbReference>
<dbReference type="CDD" id="cd04301">
    <property type="entry name" value="NAT_SF"/>
    <property type="match status" value="1"/>
</dbReference>
<dbReference type="FunFam" id="1.10.40.30:FF:000001">
    <property type="entry name" value="Argininosuccinate lyase"/>
    <property type="match status" value="1"/>
</dbReference>
<dbReference type="FunFam" id="1.20.200.10:FF:000006">
    <property type="entry name" value="Argininosuccinate lyase"/>
    <property type="match status" value="1"/>
</dbReference>
<dbReference type="Gene3D" id="3.40.630.30">
    <property type="match status" value="1"/>
</dbReference>
<dbReference type="Gene3D" id="1.10.40.30">
    <property type="entry name" value="Fumarase/aspartase (C-terminal domain)"/>
    <property type="match status" value="1"/>
</dbReference>
<dbReference type="Gene3D" id="1.20.200.10">
    <property type="entry name" value="Fumarase/aspartase (Central domain)"/>
    <property type="match status" value="1"/>
</dbReference>
<dbReference type="Gene3D" id="1.10.275.10">
    <property type="entry name" value="Fumarase/aspartase (N-terminal domain)"/>
    <property type="match status" value="1"/>
</dbReference>
<dbReference type="HAMAP" id="MF_00006">
    <property type="entry name" value="Arg_succ_lyase"/>
    <property type="match status" value="1"/>
</dbReference>
<dbReference type="InterPro" id="IPR016181">
    <property type="entry name" value="Acyl_CoA_acyltransferase"/>
</dbReference>
<dbReference type="InterPro" id="IPR029419">
    <property type="entry name" value="Arg_succ_lyase_C"/>
</dbReference>
<dbReference type="InterPro" id="IPR009049">
    <property type="entry name" value="Argininosuccinate_lyase"/>
</dbReference>
<dbReference type="InterPro" id="IPR011244">
    <property type="entry name" value="ASAL_AGS_AcTrfase"/>
</dbReference>
<dbReference type="InterPro" id="IPR024083">
    <property type="entry name" value="Fumarase/histidase_N"/>
</dbReference>
<dbReference type="InterPro" id="IPR020557">
    <property type="entry name" value="Fumarate_lyase_CS"/>
</dbReference>
<dbReference type="InterPro" id="IPR000362">
    <property type="entry name" value="Fumarate_lyase_fam"/>
</dbReference>
<dbReference type="InterPro" id="IPR022761">
    <property type="entry name" value="Fumarate_lyase_N"/>
</dbReference>
<dbReference type="InterPro" id="IPR000182">
    <property type="entry name" value="GNAT_dom"/>
</dbReference>
<dbReference type="InterPro" id="IPR008948">
    <property type="entry name" value="L-Aspartase-like"/>
</dbReference>
<dbReference type="NCBIfam" id="TIGR00838">
    <property type="entry name" value="argH"/>
    <property type="match status" value="1"/>
</dbReference>
<dbReference type="NCBIfam" id="NF008964">
    <property type="entry name" value="PRK12308.1"/>
    <property type="match status" value="1"/>
</dbReference>
<dbReference type="PANTHER" id="PTHR43814">
    <property type="entry name" value="ARGININOSUCCINATE LYASE"/>
    <property type="match status" value="1"/>
</dbReference>
<dbReference type="PANTHER" id="PTHR43814:SF1">
    <property type="entry name" value="ARGININOSUCCINATE LYASE"/>
    <property type="match status" value="1"/>
</dbReference>
<dbReference type="Pfam" id="PF00583">
    <property type="entry name" value="Acetyltransf_1"/>
    <property type="match status" value="1"/>
</dbReference>
<dbReference type="Pfam" id="PF14698">
    <property type="entry name" value="ASL_C2"/>
    <property type="match status" value="1"/>
</dbReference>
<dbReference type="Pfam" id="PF00206">
    <property type="entry name" value="Lyase_1"/>
    <property type="match status" value="1"/>
</dbReference>
<dbReference type="PIRSF" id="PIRSF036456">
    <property type="entry name" value="ASAL_AGS"/>
    <property type="match status" value="1"/>
</dbReference>
<dbReference type="PRINTS" id="PR00145">
    <property type="entry name" value="ARGSUCLYASE"/>
</dbReference>
<dbReference type="PRINTS" id="PR00149">
    <property type="entry name" value="FUMRATELYASE"/>
</dbReference>
<dbReference type="SUPFAM" id="SSF55729">
    <property type="entry name" value="Acyl-CoA N-acyltransferases (Nat)"/>
    <property type="match status" value="1"/>
</dbReference>
<dbReference type="SUPFAM" id="SSF48557">
    <property type="entry name" value="L-aspartase-like"/>
    <property type="match status" value="1"/>
</dbReference>
<dbReference type="PROSITE" id="PS00163">
    <property type="entry name" value="FUMARATE_LYASES"/>
    <property type="match status" value="1"/>
</dbReference>
<dbReference type="PROSITE" id="PS51186">
    <property type="entry name" value="GNAT"/>
    <property type="match status" value="1"/>
</dbReference>
<sequence length="624" mass="69430">MALWGGRFTQAADTRFKDFNDSLRFDYRLAEQDIVGSIAWSKALLSVNVLSKEEQQKLEFALNELKLEVMEDPHQILHSDAEDIHSWVEQQLIGKVGDLGKKLHTGRSRNDQVATDLKLWCRQQGHQLLLGLDKLQTQMVNVAKQHQATVLPGYTHLQRAQPVTFAHWCLAYVEMFERDYSRLSDALTRLDTCPLGSGALAGTAYPIDREQLAQDLGFRRATRNSLDSVSDRDHVMELMSVASISMLHLSRLAEDMIFYNSGESGFIELADTVTSGSSLMPQKKNPDALELIRGKTGRVYGSLAGMMMTVKALPLAYNKDMQEDKEGLFDALDTWNDCMEMAALCFDGIKVNGERTLEAAKQGYANSTELADYLVAKGIPFREAHHIVGVAVVGAIAQGCALEELSLEQLQSFSPVIEADVYQILTIESCLEKRSALGGVSPKQVAYAVEQADKRLAARDTTLVKVRPARITDIETLESMVAYWANLGENLPRTRSEIIRDIGLFAVSEHQGLVTGCASLYIYDSGLAEIRSLGIEAGWQRQGQGTAVVQYLIDKAKDMAIKKLFVLTRAPEFFLKQNFVQTSKSLLPEKVLKDCDQCPRQHACDEVALEFNLSEQIISQVKVA</sequence>
<proteinExistence type="inferred from homology"/>
<feature type="chain" id="PRO_0000137848" description="Bifunctional protein ArgH">
    <location>
        <begin position="1"/>
        <end position="624"/>
    </location>
</feature>
<feature type="domain" description="N-acetyltransferase">
    <location>
        <begin position="464"/>
        <end position="614"/>
    </location>
</feature>
<feature type="region of interest" description="Argininosuccinate lyase">
    <location>
        <begin position="1"/>
        <end position="466"/>
    </location>
</feature>
<feature type="region of interest" description="Probable acetyltransferase">
    <location>
        <begin position="467"/>
        <end position="624"/>
    </location>
</feature>